<proteinExistence type="evidence at transcript level"/>
<comment type="function">
    <text evidence="1">May regulate the activity of kinases.</text>
</comment>
<comment type="similarity">
    <text evidence="2">Belongs to the MOB1/phocein family.</text>
</comment>
<comment type="sequence caution" evidence="2">
    <conflict type="frameshift">
        <sequence resource="EMBL-CDS" id="AAX46581"/>
    </conflict>
</comment>
<sequence>MSNPFLKQVFNKDKTFRPKRKFEPGTQRFELHKKAQASLNAGLDLKLAVQLPAGEELNDWVAVHVVDFFNRVNLIYGTISDGCTERSCPIMSGGPKYEYRWQDENKFRRPTALSAPRYMDLLMDWIEVQINNEDVFPTNVGTPFPKNFLQVVKKILSRLFRVFVHVYIHHFDRIAQLGSEAHVNTCYKHFYYFVTEFGLIDTKELEPLKEMTARMCH</sequence>
<dbReference type="EMBL" id="BT021734">
    <property type="protein sequence ID" value="AAX46581.1"/>
    <property type="status" value="ALT_FRAME"/>
    <property type="molecule type" value="mRNA"/>
</dbReference>
<dbReference type="EMBL" id="BC123409">
    <property type="protein sequence ID" value="AAI23410.1"/>
    <property type="molecule type" value="mRNA"/>
</dbReference>
<dbReference type="RefSeq" id="NP_001029401.2">
    <property type="nucleotide sequence ID" value="NM_001034229.2"/>
</dbReference>
<dbReference type="RefSeq" id="XP_005209086.1">
    <property type="nucleotide sequence ID" value="XM_005209029.5"/>
</dbReference>
<dbReference type="RefSeq" id="XP_005209087.1">
    <property type="nucleotide sequence ID" value="XM_005209030.3"/>
</dbReference>
<dbReference type="RefSeq" id="XP_015327590.1">
    <property type="nucleotide sequence ID" value="XM_015472104.1"/>
</dbReference>
<dbReference type="RefSeq" id="XP_059743960.1">
    <property type="nucleotide sequence ID" value="XM_059887977.1"/>
</dbReference>
<dbReference type="SMR" id="Q58D63"/>
<dbReference type="FunCoup" id="Q58D63">
    <property type="interactions" value="2567"/>
</dbReference>
<dbReference type="STRING" id="9913.ENSBTAP00000065675"/>
<dbReference type="PaxDb" id="9913-ENSBTAP00000019309"/>
<dbReference type="GeneID" id="505007"/>
<dbReference type="KEGG" id="bta:505007"/>
<dbReference type="CTD" id="126308"/>
<dbReference type="VEuPathDB" id="HostDB:ENSBTAG00000014526"/>
<dbReference type="eggNOG" id="KOG1903">
    <property type="taxonomic scope" value="Eukaryota"/>
</dbReference>
<dbReference type="HOGENOM" id="CLU_038321_3_0_1"/>
<dbReference type="InParanoid" id="Q58D63"/>
<dbReference type="OMA" id="HMGSEAH"/>
<dbReference type="OrthoDB" id="8170117at2759"/>
<dbReference type="TreeFam" id="TF300789"/>
<dbReference type="Proteomes" id="UP000009136">
    <property type="component" value="Chromosome 7"/>
</dbReference>
<dbReference type="Bgee" id="ENSBTAG00000014526">
    <property type="expression patterns" value="Expressed in retropharyngeal lymph node and 105 other cell types or tissues"/>
</dbReference>
<dbReference type="GO" id="GO:0005737">
    <property type="term" value="C:cytoplasm"/>
    <property type="evidence" value="ECO:0000318"/>
    <property type="project" value="GO_Central"/>
</dbReference>
<dbReference type="GO" id="GO:0005634">
    <property type="term" value="C:nucleus"/>
    <property type="evidence" value="ECO:0000318"/>
    <property type="project" value="GO_Central"/>
</dbReference>
<dbReference type="GO" id="GO:0046872">
    <property type="term" value="F:metal ion binding"/>
    <property type="evidence" value="ECO:0007669"/>
    <property type="project" value="UniProtKB-KW"/>
</dbReference>
<dbReference type="GO" id="GO:0030295">
    <property type="term" value="F:protein kinase activator activity"/>
    <property type="evidence" value="ECO:0000318"/>
    <property type="project" value="GO_Central"/>
</dbReference>
<dbReference type="GO" id="GO:0007165">
    <property type="term" value="P:signal transduction"/>
    <property type="evidence" value="ECO:0000318"/>
    <property type="project" value="GO_Central"/>
</dbReference>
<dbReference type="FunFam" id="1.20.140.30:FF:000001">
    <property type="entry name" value="MOB kinase activator 1A"/>
    <property type="match status" value="1"/>
</dbReference>
<dbReference type="Gene3D" id="1.20.140.30">
    <property type="entry name" value="MOB kinase activator"/>
    <property type="match status" value="1"/>
</dbReference>
<dbReference type="InterPro" id="IPR005301">
    <property type="entry name" value="MOB_kinase_act_fam"/>
</dbReference>
<dbReference type="InterPro" id="IPR036703">
    <property type="entry name" value="MOB_kinase_act_sf"/>
</dbReference>
<dbReference type="PANTHER" id="PTHR22599">
    <property type="entry name" value="MPS ONE BINDER KINASE ACTIVATOR-LIKE MOB"/>
    <property type="match status" value="1"/>
</dbReference>
<dbReference type="Pfam" id="PF03637">
    <property type="entry name" value="Mob1_phocein"/>
    <property type="match status" value="1"/>
</dbReference>
<dbReference type="SMART" id="SM01388">
    <property type="entry name" value="Mob1_phocein"/>
    <property type="match status" value="1"/>
</dbReference>
<dbReference type="SUPFAM" id="SSF101152">
    <property type="entry name" value="Mob1/phocein"/>
    <property type="match status" value="1"/>
</dbReference>
<gene>
    <name type="primary">MOB3A</name>
    <name type="synonym">MOBKL2A</name>
</gene>
<accession>Q58D63</accession>
<accession>Q08E56</accession>
<keyword id="KW-0479">Metal-binding</keyword>
<keyword id="KW-1185">Reference proteome</keyword>
<keyword id="KW-0862">Zinc</keyword>
<protein>
    <recommendedName>
        <fullName>MOB kinase activator 3A</fullName>
    </recommendedName>
    <alternativeName>
        <fullName>Mob1 homolog 2A</fullName>
    </alternativeName>
    <alternativeName>
        <fullName>Mps one binder kinase activator-like 2A</fullName>
    </alternativeName>
</protein>
<name>MOB3A_BOVIN</name>
<reference key="1">
    <citation type="journal article" date="2005" name="BMC Genomics">
        <title>Characterization of 954 bovine full-CDS cDNA sequences.</title>
        <authorList>
            <person name="Harhay G.P."/>
            <person name="Sonstegard T.S."/>
            <person name="Keele J.W."/>
            <person name="Heaton M.P."/>
            <person name="Clawson M.L."/>
            <person name="Snelling W.M."/>
            <person name="Wiedmann R.T."/>
            <person name="Van Tassell C.P."/>
            <person name="Smith T.P.L."/>
        </authorList>
    </citation>
    <scope>NUCLEOTIDE SEQUENCE [LARGE SCALE MRNA]</scope>
</reference>
<reference key="2">
    <citation type="submission" date="2006-09" db="EMBL/GenBank/DDBJ databases">
        <authorList>
            <consortium name="NIH - Mammalian Gene Collection (MGC) project"/>
        </authorList>
    </citation>
    <scope>NUCLEOTIDE SEQUENCE [LARGE SCALE MRNA]</scope>
    <source>
        <strain>Hereford</strain>
        <tissue>Thalamus</tissue>
    </source>
</reference>
<feature type="chain" id="PRO_0000249710" description="MOB kinase activator 3A">
    <location>
        <begin position="1"/>
        <end position="217"/>
    </location>
</feature>
<feature type="binding site" evidence="1">
    <location>
        <position position="83"/>
    </location>
    <ligand>
        <name>Zn(2+)</name>
        <dbReference type="ChEBI" id="CHEBI:29105"/>
    </ligand>
</feature>
<feature type="binding site" evidence="1">
    <location>
        <position position="88"/>
    </location>
    <ligand>
        <name>Zn(2+)</name>
        <dbReference type="ChEBI" id="CHEBI:29105"/>
    </ligand>
</feature>
<feature type="binding site" evidence="1">
    <location>
        <position position="165"/>
    </location>
    <ligand>
        <name>Zn(2+)</name>
        <dbReference type="ChEBI" id="CHEBI:29105"/>
    </ligand>
</feature>
<feature type="binding site" evidence="1">
    <location>
        <position position="170"/>
    </location>
    <ligand>
        <name>Zn(2+)</name>
        <dbReference type="ChEBI" id="CHEBI:29105"/>
    </ligand>
</feature>
<evidence type="ECO:0000250" key="1"/>
<evidence type="ECO:0000305" key="2"/>
<organism>
    <name type="scientific">Bos taurus</name>
    <name type="common">Bovine</name>
    <dbReference type="NCBI Taxonomy" id="9913"/>
    <lineage>
        <taxon>Eukaryota</taxon>
        <taxon>Metazoa</taxon>
        <taxon>Chordata</taxon>
        <taxon>Craniata</taxon>
        <taxon>Vertebrata</taxon>
        <taxon>Euteleostomi</taxon>
        <taxon>Mammalia</taxon>
        <taxon>Eutheria</taxon>
        <taxon>Laurasiatheria</taxon>
        <taxon>Artiodactyla</taxon>
        <taxon>Ruminantia</taxon>
        <taxon>Pecora</taxon>
        <taxon>Bovidae</taxon>
        <taxon>Bovinae</taxon>
        <taxon>Bos</taxon>
    </lineage>
</organism>